<protein>
    <recommendedName>
        <fullName>Solute carrier family 12 member 1</fullName>
    </recommendedName>
    <alternativeName>
        <fullName evidence="8">Bumetanide-sensitive sodium-(potassium)-chloride cotransporter 1</fullName>
        <shortName>BSC1</shortName>
    </alternativeName>
    <alternativeName>
        <fullName>Kidney-specific Na-K-Cl symporter</fullName>
    </alternativeName>
    <alternativeName>
        <fullName>Na-K-2Cl cotransporter 2</fullName>
        <shortName>NKCC2</shortName>
    </alternativeName>
</protein>
<evidence type="ECO:0000250" key="1">
    <source>
        <dbReference type="UniProtKB" id="P55014"/>
    </source>
</evidence>
<evidence type="ECO:0000250" key="2">
    <source>
        <dbReference type="UniProtKB" id="Q13621"/>
    </source>
</evidence>
<evidence type="ECO:0000255" key="3"/>
<evidence type="ECO:0000256" key="4">
    <source>
        <dbReference type="SAM" id="MobiDB-lite"/>
    </source>
</evidence>
<evidence type="ECO:0000269" key="5">
    <source>
    </source>
</evidence>
<evidence type="ECO:0000269" key="6">
    <source>
    </source>
</evidence>
<evidence type="ECO:0000269" key="7">
    <source>
    </source>
</evidence>
<evidence type="ECO:0000303" key="8">
    <source>
    </source>
</evidence>
<evidence type="ECO:0000305" key="9"/>
<evidence type="ECO:0000305" key="10">
    <source>
    </source>
</evidence>
<evidence type="ECO:0000305" key="11">
    <source>
    </source>
</evidence>
<evidence type="ECO:0007744" key="12">
    <source>
    </source>
</evidence>
<gene>
    <name type="primary">Slc12a1</name>
    <name type="synonym">Nkcc2</name>
</gene>
<dbReference type="EMBL" id="U10096">
    <property type="protein sequence ID" value="AAA21251.1"/>
    <property type="molecule type" value="mRNA"/>
</dbReference>
<dbReference type="PIR" id="A54145">
    <property type="entry name" value="A54145"/>
</dbReference>
<dbReference type="SMR" id="P55016"/>
<dbReference type="FunCoup" id="P55016">
    <property type="interactions" value="195"/>
</dbReference>
<dbReference type="STRING" id="10116.ENSRNOP00000073076"/>
<dbReference type="TCDB" id="2.A.30.1.1">
    <property type="family name" value="the cation-chloride cotransporter (ccc) family"/>
</dbReference>
<dbReference type="GlyCosmos" id="P55016">
    <property type="glycosylation" value="2 sites, No reported glycans"/>
</dbReference>
<dbReference type="GlyGen" id="P55016">
    <property type="glycosylation" value="2 sites"/>
</dbReference>
<dbReference type="iPTMnet" id="P55016"/>
<dbReference type="PhosphoSitePlus" id="P55016"/>
<dbReference type="PaxDb" id="10116-ENSRNOP00000008857"/>
<dbReference type="UCSC" id="RGD:3685">
    <property type="organism name" value="rat"/>
</dbReference>
<dbReference type="AGR" id="RGD:3685"/>
<dbReference type="RGD" id="3685">
    <property type="gene designation" value="Slc12a1"/>
</dbReference>
<dbReference type="eggNOG" id="KOG2083">
    <property type="taxonomic scope" value="Eukaryota"/>
</dbReference>
<dbReference type="InParanoid" id="P55016"/>
<dbReference type="PhylomeDB" id="P55016"/>
<dbReference type="Reactome" id="R-RNO-426117">
    <property type="pathway name" value="Cation-coupled Chloride cotransporters"/>
</dbReference>
<dbReference type="PRO" id="PR:P55016"/>
<dbReference type="Proteomes" id="UP000002494">
    <property type="component" value="Unplaced"/>
</dbReference>
<dbReference type="GO" id="GO:0016324">
    <property type="term" value="C:apical plasma membrane"/>
    <property type="evidence" value="ECO:0000314"/>
    <property type="project" value="RGD"/>
</dbReference>
<dbReference type="GO" id="GO:0009986">
    <property type="term" value="C:cell surface"/>
    <property type="evidence" value="ECO:0000314"/>
    <property type="project" value="RGD"/>
</dbReference>
<dbReference type="GO" id="GO:0070062">
    <property type="term" value="C:extracellular exosome"/>
    <property type="evidence" value="ECO:0000266"/>
    <property type="project" value="RGD"/>
</dbReference>
<dbReference type="GO" id="GO:0120283">
    <property type="term" value="F:protein serine/threonine kinase binding"/>
    <property type="evidence" value="ECO:0000353"/>
    <property type="project" value="BHF-UCL"/>
</dbReference>
<dbReference type="GO" id="GO:0008511">
    <property type="term" value="F:sodium:potassium:chloride symporter activity"/>
    <property type="evidence" value="ECO:0000314"/>
    <property type="project" value="RGD"/>
</dbReference>
<dbReference type="GO" id="GO:0006884">
    <property type="term" value="P:cell volume homeostasis"/>
    <property type="evidence" value="ECO:0000266"/>
    <property type="project" value="RGD"/>
</dbReference>
<dbReference type="GO" id="GO:0055064">
    <property type="term" value="P:chloride ion homeostasis"/>
    <property type="evidence" value="ECO:0000318"/>
    <property type="project" value="GO_Central"/>
</dbReference>
<dbReference type="GO" id="GO:1902476">
    <property type="term" value="P:chloride transmembrane transport"/>
    <property type="evidence" value="ECO:0000318"/>
    <property type="project" value="GO_Central"/>
</dbReference>
<dbReference type="GO" id="GO:0006821">
    <property type="term" value="P:chloride transport"/>
    <property type="evidence" value="ECO:0000314"/>
    <property type="project" value="RGD"/>
</dbReference>
<dbReference type="GO" id="GO:0016101">
    <property type="term" value="P:diterpenoid metabolic process"/>
    <property type="evidence" value="ECO:0000270"/>
    <property type="project" value="RGD"/>
</dbReference>
<dbReference type="GO" id="GO:0001822">
    <property type="term" value="P:kidney development"/>
    <property type="evidence" value="ECO:0000266"/>
    <property type="project" value="RGD"/>
</dbReference>
<dbReference type="GO" id="GO:0034220">
    <property type="term" value="P:monoatomic ion transmembrane transport"/>
    <property type="evidence" value="ECO:0000314"/>
    <property type="project" value="BHF-UCL"/>
</dbReference>
<dbReference type="GO" id="GO:0055075">
    <property type="term" value="P:potassium ion homeostasis"/>
    <property type="evidence" value="ECO:0000318"/>
    <property type="project" value="GO_Central"/>
</dbReference>
<dbReference type="GO" id="GO:1990573">
    <property type="term" value="P:potassium ion import across plasma membrane"/>
    <property type="evidence" value="ECO:0000318"/>
    <property type="project" value="GO_Central"/>
</dbReference>
<dbReference type="GO" id="GO:0006813">
    <property type="term" value="P:potassium ion transport"/>
    <property type="evidence" value="ECO:0000314"/>
    <property type="project" value="RGD"/>
</dbReference>
<dbReference type="GO" id="GO:0032978">
    <property type="term" value="P:protein insertion into membrane from inner side"/>
    <property type="evidence" value="ECO:0000314"/>
    <property type="project" value="RGD"/>
</dbReference>
<dbReference type="GO" id="GO:0070294">
    <property type="term" value="P:renal sodium ion absorption"/>
    <property type="evidence" value="ECO:0000314"/>
    <property type="project" value="BHF-UCL"/>
</dbReference>
<dbReference type="GO" id="GO:0055078">
    <property type="term" value="P:sodium ion homeostasis"/>
    <property type="evidence" value="ECO:0000318"/>
    <property type="project" value="GO_Central"/>
</dbReference>
<dbReference type="GO" id="GO:0035725">
    <property type="term" value="P:sodium ion transmembrane transport"/>
    <property type="evidence" value="ECO:0000318"/>
    <property type="project" value="GO_Central"/>
</dbReference>
<dbReference type="GO" id="GO:0006814">
    <property type="term" value="P:sodium ion transport"/>
    <property type="evidence" value="ECO:0000314"/>
    <property type="project" value="RGD"/>
</dbReference>
<dbReference type="GO" id="GO:0071918">
    <property type="term" value="P:urea transmembrane transport"/>
    <property type="evidence" value="ECO:0000266"/>
    <property type="project" value="RGD"/>
</dbReference>
<dbReference type="FunFam" id="1.20.1740.10:FF:000005">
    <property type="entry name" value="Solute carrier family 12 member 1"/>
    <property type="match status" value="1"/>
</dbReference>
<dbReference type="Gene3D" id="1.20.1740.10">
    <property type="entry name" value="Amino acid/polyamine transporter I"/>
    <property type="match status" value="1"/>
</dbReference>
<dbReference type="InterPro" id="IPR004841">
    <property type="entry name" value="AA-permease/SLC12A_dom"/>
</dbReference>
<dbReference type="InterPro" id="IPR013612">
    <property type="entry name" value="AA_permease_N"/>
</dbReference>
<dbReference type="InterPro" id="IPR018491">
    <property type="entry name" value="SLC12_C"/>
</dbReference>
<dbReference type="InterPro" id="IPR002445">
    <property type="entry name" value="Slc12a1"/>
</dbReference>
<dbReference type="InterPro" id="IPR002443">
    <property type="entry name" value="SLC12A1/SLC12A2"/>
</dbReference>
<dbReference type="InterPro" id="IPR004842">
    <property type="entry name" value="SLC12A_fam"/>
</dbReference>
<dbReference type="NCBIfam" id="TIGR00930">
    <property type="entry name" value="2a30"/>
    <property type="match status" value="1"/>
</dbReference>
<dbReference type="PANTHER" id="PTHR11827:SF93">
    <property type="entry name" value="SOLUTE CARRIER FAMILY 12 MEMBER 1"/>
    <property type="match status" value="1"/>
</dbReference>
<dbReference type="PANTHER" id="PTHR11827">
    <property type="entry name" value="SOLUTE CARRIER FAMILY 12, CATION COTRANSPORTERS"/>
    <property type="match status" value="1"/>
</dbReference>
<dbReference type="Pfam" id="PF00324">
    <property type="entry name" value="AA_permease"/>
    <property type="match status" value="1"/>
</dbReference>
<dbReference type="Pfam" id="PF08403">
    <property type="entry name" value="AA_permease_N"/>
    <property type="match status" value="1"/>
</dbReference>
<dbReference type="Pfam" id="PF03522">
    <property type="entry name" value="SLC12"/>
    <property type="match status" value="1"/>
</dbReference>
<dbReference type="PRINTS" id="PR01207">
    <property type="entry name" value="NAKCLTRNSPRT"/>
</dbReference>
<dbReference type="PRINTS" id="PR01209">
    <property type="entry name" value="NAKCLTRSPRT2"/>
</dbReference>
<comment type="function">
    <text evidence="7 10">Renal sodium, potassium and chloride ion cotransporter that mediates the transepithelial NaCl reabsorption in the thick ascending limb and plays an essential role in the urinary concentration and volume regulation. Electrically silent transporter system.</text>
</comment>
<comment type="catalytic activity">
    <reaction evidence="7">
        <text>K(+)(out) + 2 chloride(out) + Na(+)(out) = K(+)(in) + 2 chloride(in) + Na(+)(in)</text>
        <dbReference type="Rhea" id="RHEA:72395"/>
        <dbReference type="ChEBI" id="CHEBI:17996"/>
        <dbReference type="ChEBI" id="CHEBI:29101"/>
        <dbReference type="ChEBI" id="CHEBI:29103"/>
    </reaction>
    <physiologicalReaction direction="left-to-right" evidence="11">
        <dbReference type="Rhea" id="RHEA:72396"/>
    </physiologicalReaction>
</comment>
<comment type="activity regulation">
    <text evidence="2">Activated following phosphorylation by OXSR1/OSR1 and STK39/SPAK downstream of WNK kinases (WNK1, WNK2, WNK3 or WNK4).</text>
</comment>
<comment type="subunit">
    <text evidence="6">When phosphorylated, interacts with PPP3CB.</text>
</comment>
<comment type="subcellular location">
    <subcellularLocation>
        <location evidence="1">Apical cell membrane</location>
        <topology evidence="3">Multi-pass membrane protein</topology>
    </subcellularLocation>
</comment>
<comment type="tissue specificity">
    <text evidence="6 7">Expressed predominantly in kidney (at protein level).</text>
</comment>
<comment type="domain">
    <text evidence="2">The RFXV motif mediates binding with OXSR1/OSR1 and STK39/SPAK.</text>
</comment>
<comment type="PTM">
    <text evidence="2">Phosphorylated at Ser-87, Thr-96 and Thr-101 by OXSR1/OSR1 and STK39/SPAK downstream of WNK kinases (WNK1, WNK2, WNK3 or WNK4), promoting its activity.</text>
</comment>
<comment type="similarity">
    <text evidence="9">Belongs to the SLC12A transporter family.</text>
</comment>
<sequence length="1095" mass="120597">MSVNIPSNSVPSGASRFQVHVINEGHGSGAAMSDSTDPPHYEETSFGDEAQNRLKISFRPGNQECYENFLQTGETAKTDTTFHAYDSHTNTYYLQTFGHNTMDAVPKIEYYRNTGSVSGPKVNRPSLQEIHEQLAKNVAVAPGSADRVANGDGMPGDEQAENKEEDVTGVVKFGWVKGVLVRCMLNIWGVMLFIRLSWIVGEAGIGLGVIIIGLSVVVTTLTGISMSAICTNGVVRGGGAYYLISRSLGPEFGGSIGLIFRFANAVRVAMYVVGFAETVVDLLKESDSMMVDPTNDIRIIGSITVVILLGISVAGMEWEAKAQVILLVILLIGIANFFIGTVIPSNNEKKSRGFFNYQASIFAENFGPSFTEGEGFFSVFAIFFPAATGILAGANISGDLEDPQDAIPRGTMLAIFITTVAYIGVAICVRACVVRDATGSMNDTVVSGMNCNGSAACGLGYDFSRCQHEPCQYGLMNNFQVMSMVSGFGPLITAGIFSATLSSALASLVSAPKVFQALCKDNIFKGLQFFAKGYGKNNEPLRGYFLTFVIAMAFILIAELNVIAPIISNFFLASYALINFSCFHASYAKSPGWRPAYGIYNMWVSLFGAILCCAVMFVINWWAAVITYVIELFLYIYVTYKKPDVNWGSSTQALSYVSALDNALELTTVEDHVKNFRPQCIVLTGGPMTRPALLDITHAFTKNSGLCICCEVFVGPRKLCVKEMNSGMAKKQAWLMKNKIKAFYAAVAADCFRDGVRSLLQASGLGRMKPNTLVIGYKKNWRKAPLSELENYVGIIHDAFDFEIGVVIVRISQGFDISPVLQVQDELEKLEQERLALEAAIKDNDCEEGKGGIRGLFKKAGKLNITKPAPKKDSNISTIQSMHVGEFNQKLVEASAQFKKKQGKGTIDVWWLFDDGGLTLLIPYILTLRKKWKDCKLRIYVGGKINRIEEEKISMASLLSKFRIKFADIHIIGDINIKPNKESWKVFEEMIEPYRLHESHKDLTTAEKLKRESPWKITDAELEAVKEKSYRQVRLNELLQEHSRAANLIVLSLPVARKGSISDLLYMAWLEILTKNLPPVLLVRGNHKNVLTFYS</sequence>
<name>S12A1_RAT</name>
<reference key="1">
    <citation type="journal article" date="1994" name="J. Biol. Chem.">
        <title>Molecular cloning, primary structure, and characterization of two members of the mammalian electroneutral sodium-(potassium)-chloride cotransporter family expressed in kidney.</title>
        <authorList>
            <person name="Gamba G."/>
            <person name="Miyanoshita A."/>
            <person name="Lombardi M."/>
            <person name="Lytton J."/>
            <person name="Lee W.S."/>
            <person name="Hediger M.A."/>
            <person name="Hebert S.C."/>
        </authorList>
    </citation>
    <scope>NUCLEOTIDE SEQUENCE [MRNA]</scope>
    <scope>FUNCTION</scope>
    <scope>TRANSPORT ACTIVITY</scope>
    <scope>TISSUE SPECIFICITY</scope>
    <source>
        <strain>Sprague-Dawley</strain>
        <tissue>Kidney</tissue>
    </source>
</reference>
<reference key="2">
    <citation type="journal article" date="2007" name="Biochem. J.">
        <title>Regulation of the renal-specific Na+-K+-2Cl- co-transporter NKCC2 by AMP-activated protein kinase (AMPK).</title>
        <authorList>
            <person name="Fraser S.A."/>
            <person name="Gimenez I."/>
            <person name="Cook N."/>
            <person name="Jennings I."/>
            <person name="Katerelos M."/>
            <person name="Katsis F."/>
            <person name="Levidiotis V."/>
            <person name="Kemp B.E."/>
            <person name="Power D.A."/>
        </authorList>
    </citation>
    <scope>PHOSPHORYLATION AT SER-126</scope>
</reference>
<reference key="3">
    <citation type="journal article" date="2012" name="Nat. Commun.">
        <title>Quantitative maps of protein phosphorylation sites across 14 different rat organs and tissues.</title>
        <authorList>
            <person name="Lundby A."/>
            <person name="Secher A."/>
            <person name="Lage K."/>
            <person name="Nordsborg N.B."/>
            <person name="Dmytriyev A."/>
            <person name="Lundby C."/>
            <person name="Olsen J.V."/>
        </authorList>
    </citation>
    <scope>PHOSPHORYLATION [LARGE SCALE ANALYSIS] AT THR-114; SER-116 AND SER-144</scope>
    <scope>IDENTIFICATION BY MASS SPECTROMETRY [LARGE SCALE ANALYSIS]</scope>
</reference>
<reference key="4">
    <citation type="journal article" date="2016" name="J. Am. Soc. Nephrol.">
        <title>Calcineurin and sorting-related receptor with A-type repeats interact to regulate the renal Na(+)-K(+)-2Cl(-) cotransporter.</title>
        <authorList>
            <person name="Borschewski A."/>
            <person name="Himmerkus N."/>
            <person name="Boldt C."/>
            <person name="Blankenstein K.I."/>
            <person name="McCormick J.A."/>
            <person name="Lazelle R."/>
            <person name="Willnow T.E."/>
            <person name="Jankowski V."/>
            <person name="Plain A."/>
            <person name="Bleich M."/>
            <person name="Ellison D.H."/>
            <person name="Bachmann S."/>
            <person name="Mutig K."/>
        </authorList>
    </citation>
    <scope>INTERACTION WITH PPP3CB</scope>
    <scope>TISSUE SPECIFICITY</scope>
    <scope>MUTAGENESIS OF THR-96; THR-101 AND THR-114</scope>
</reference>
<feature type="chain" id="PRO_0000178021" description="Solute carrier family 12 member 1">
    <location>
        <begin position="1"/>
        <end position="1095"/>
    </location>
</feature>
<feature type="topological domain" description="Cytoplasmic" evidence="9">
    <location>
        <begin position="1"/>
        <end position="173"/>
    </location>
</feature>
<feature type="transmembrane region" description="Helical" evidence="3">
    <location>
        <begin position="174"/>
        <end position="194"/>
    </location>
</feature>
<feature type="topological domain" description="Extracellular" evidence="9">
    <location>
        <begin position="195"/>
        <end position="197"/>
    </location>
</feature>
<feature type="transmembrane region" description="Helical" evidence="3">
    <location>
        <begin position="198"/>
        <end position="218"/>
    </location>
</feature>
<feature type="topological domain" description="Cytoplasmic" evidence="9">
    <location>
        <begin position="219"/>
        <end position="255"/>
    </location>
</feature>
<feature type="transmembrane region" description="Helical" evidence="3">
    <location>
        <begin position="256"/>
        <end position="276"/>
    </location>
</feature>
<feature type="topological domain" description="Extracellular" evidence="9">
    <location>
        <begin position="277"/>
        <end position="298"/>
    </location>
</feature>
<feature type="transmembrane region" description="Helical" evidence="3">
    <location>
        <begin position="299"/>
        <end position="319"/>
    </location>
</feature>
<feature type="topological domain" description="Cytoplasmic" evidence="9">
    <location>
        <begin position="320"/>
        <end position="323"/>
    </location>
</feature>
<feature type="transmembrane region" description="Helical" evidence="3">
    <location>
        <begin position="324"/>
        <end position="344"/>
    </location>
</feature>
<feature type="topological domain" description="Extracellular" evidence="9">
    <location>
        <begin position="345"/>
        <end position="375"/>
    </location>
</feature>
<feature type="transmembrane region" description="Helical" evidence="3">
    <location>
        <begin position="376"/>
        <end position="396"/>
    </location>
</feature>
<feature type="topological domain" description="Cytoplasmic" evidence="9">
    <location>
        <begin position="397"/>
        <end position="413"/>
    </location>
</feature>
<feature type="transmembrane region" description="Helical" evidence="3">
    <location>
        <begin position="414"/>
        <end position="434"/>
    </location>
</feature>
<feature type="topological domain" description="Extracellular" evidence="9">
    <location>
        <begin position="435"/>
        <end position="546"/>
    </location>
</feature>
<feature type="transmembrane region" description="Helical" evidence="3">
    <location>
        <begin position="547"/>
        <end position="567"/>
    </location>
</feature>
<feature type="transmembrane region" description="Helical" evidence="3">
    <location>
        <begin position="568"/>
        <end position="588"/>
    </location>
</feature>
<feature type="topological domain" description="Extracellular" evidence="9">
    <location>
        <begin position="589"/>
        <end position="605"/>
    </location>
</feature>
<feature type="transmembrane region" description="Helical" evidence="3">
    <location>
        <begin position="606"/>
        <end position="626"/>
    </location>
</feature>
<feature type="topological domain" description="Cytoplasmic" evidence="9">
    <location>
        <begin position="627"/>
        <end position="1095"/>
    </location>
</feature>
<feature type="region of interest" description="Disordered" evidence="4">
    <location>
        <begin position="26"/>
        <end position="45"/>
    </location>
</feature>
<feature type="short sequence motif" description="RFXV motif" evidence="2">
    <location>
        <begin position="16"/>
        <end position="19"/>
    </location>
</feature>
<feature type="modified residue" description="Phosphoserine" evidence="1">
    <location>
        <position position="57"/>
    </location>
</feature>
<feature type="modified residue" description="Phosphoserine" evidence="2">
    <location>
        <position position="87"/>
    </location>
</feature>
<feature type="modified residue" description="Phosphothreonine" evidence="2">
    <location>
        <position position="91"/>
    </location>
</feature>
<feature type="modified residue" description="Phosphothreonine" evidence="1">
    <location>
        <position position="96"/>
    </location>
</feature>
<feature type="modified residue" description="Phosphothreonine" evidence="1">
    <location>
        <position position="101"/>
    </location>
</feature>
<feature type="modified residue" description="Phosphothreonine" evidence="12">
    <location>
        <position position="114"/>
    </location>
</feature>
<feature type="modified residue" description="Phosphoserine" evidence="12">
    <location>
        <position position="116"/>
    </location>
</feature>
<feature type="modified residue" description="Phosphoserine; by AMPK" evidence="5">
    <location>
        <position position="126"/>
    </location>
</feature>
<feature type="modified residue" description="Phosphoserine" evidence="12">
    <location>
        <position position="144"/>
    </location>
</feature>
<feature type="glycosylation site" description="N-linked (GlcNAc...) asparagine" evidence="3">
    <location>
        <position position="442"/>
    </location>
</feature>
<feature type="glycosylation site" description="N-linked (GlcNAc...) asparagine" evidence="3">
    <location>
        <position position="452"/>
    </location>
</feature>
<feature type="mutagenesis site" description="Loss of interaction with PPP3CB." evidence="6">
    <original>T</original>
    <variation>A</variation>
    <location>
        <position position="96"/>
    </location>
</feature>
<feature type="mutagenesis site" description="No effect on interaction with PPP3CB." evidence="6">
    <original>T</original>
    <variation>D</variation>
    <location>
        <position position="96"/>
    </location>
</feature>
<feature type="mutagenesis site" description="Loss of interaction with PPP3CB." evidence="6">
    <original>T</original>
    <variation>A</variation>
    <location>
        <position position="101"/>
    </location>
</feature>
<feature type="mutagenesis site" description="No effect on interaction with PPP3CB." evidence="6">
    <original>T</original>
    <variation>D</variation>
    <location>
        <position position="101"/>
    </location>
</feature>
<feature type="mutagenesis site" description="Loss of interaction with PPP3CB." evidence="6">
    <original>T</original>
    <variation>A</variation>
    <location>
        <position position="114"/>
    </location>
</feature>
<feature type="mutagenesis site" description="No effect on interaction with PPP3CB." evidence="6">
    <original>T</original>
    <variation>D</variation>
    <location>
        <position position="114"/>
    </location>
</feature>
<organism>
    <name type="scientific">Rattus norvegicus</name>
    <name type="common">Rat</name>
    <dbReference type="NCBI Taxonomy" id="10116"/>
    <lineage>
        <taxon>Eukaryota</taxon>
        <taxon>Metazoa</taxon>
        <taxon>Chordata</taxon>
        <taxon>Craniata</taxon>
        <taxon>Vertebrata</taxon>
        <taxon>Euteleostomi</taxon>
        <taxon>Mammalia</taxon>
        <taxon>Eutheria</taxon>
        <taxon>Euarchontoglires</taxon>
        <taxon>Glires</taxon>
        <taxon>Rodentia</taxon>
        <taxon>Myomorpha</taxon>
        <taxon>Muroidea</taxon>
        <taxon>Muridae</taxon>
        <taxon>Murinae</taxon>
        <taxon>Rattus</taxon>
    </lineage>
</organism>
<keyword id="KW-1003">Cell membrane</keyword>
<keyword id="KW-0868">Chloride</keyword>
<keyword id="KW-0325">Glycoprotein</keyword>
<keyword id="KW-0406">Ion transport</keyword>
<keyword id="KW-0472">Membrane</keyword>
<keyword id="KW-0597">Phosphoprotein</keyword>
<keyword id="KW-0630">Potassium</keyword>
<keyword id="KW-0633">Potassium transport</keyword>
<keyword id="KW-1185">Reference proteome</keyword>
<keyword id="KW-0915">Sodium</keyword>
<keyword id="KW-0739">Sodium transport</keyword>
<keyword id="KW-0769">Symport</keyword>
<keyword id="KW-0812">Transmembrane</keyword>
<keyword id="KW-1133">Transmembrane helix</keyword>
<keyword id="KW-0813">Transport</keyword>
<proteinExistence type="evidence at protein level"/>
<accession>P55016</accession>